<feature type="chain" id="PRO_0000330808" description="Transcription factor PCF5">
    <location>
        <begin position="1"/>
        <end position="582"/>
    </location>
</feature>
<feature type="domain" description="TCP" evidence="1">
    <location>
        <begin position="213"/>
        <end position="271"/>
    </location>
</feature>
<feature type="region of interest" description="Disordered" evidence="2">
    <location>
        <begin position="30"/>
        <end position="78"/>
    </location>
</feature>
<feature type="region of interest" description="Disordered" evidence="2">
    <location>
        <begin position="123"/>
        <end position="195"/>
    </location>
</feature>
<feature type="region of interest" description="Disordered" evidence="2">
    <location>
        <begin position="283"/>
        <end position="306"/>
    </location>
</feature>
<feature type="region of interest" description="Disordered" evidence="2">
    <location>
        <begin position="402"/>
        <end position="423"/>
    </location>
</feature>
<feature type="region of interest" description="Disordered" evidence="2">
    <location>
        <begin position="548"/>
        <end position="582"/>
    </location>
</feature>
<feature type="compositionally biased region" description="Gly residues" evidence="2">
    <location>
        <begin position="51"/>
        <end position="64"/>
    </location>
</feature>
<gene>
    <name type="primary">PCF5</name>
    <name type="ORF">OsI_000857</name>
</gene>
<keyword id="KW-0010">Activator</keyword>
<keyword id="KW-0217">Developmental protein</keyword>
<keyword id="KW-0238">DNA-binding</keyword>
<keyword id="KW-0539">Nucleus</keyword>
<keyword id="KW-1185">Reference proteome</keyword>
<keyword id="KW-0804">Transcription</keyword>
<keyword id="KW-0805">Transcription regulation</keyword>
<sequence length="582" mass="60254">METRPPAAPAKLSYGIRRGGWTRIGAATVAAGKKAAGDLDPRHHHHRVTHGGDGGGVGGGGSGGQEEADEQQQQQHDHHRLLQLHHHQGVQQDQEPPPVPVFHLQPASVRQLSGSSAEYALLSPMGDAGGHSHHHQHGFQPQLLSFGGVGHHHHLHQFTAQPQPPAASHTRGRGGGGEIVPATTTPRSRGGGGGGGGEIVAVQGGHIVRSTGRKDRHSKVCTARGPRDRRVRLSAHTAIQFYDVQDRLGYDRPSKAVDWLIKNAKDAIDKLDVLPAWQPTAGGAGAGNAAAPPSSSTHPDSAENSDDQAQAITVAHTAFDFAGGGSGGTSFLPPSLDSDAIADTIKSFFPMGGTAGGEASSSTTAAQSSAMGFQSYTPDLLSRTGSQSQELRLSLQSLPDPMFHHQQHRHGGGGGGGNGTTQQALFSGAANYSFGGGAMWATEQQAQNQRMLPWNVPDPGGGGGAAYLFNVSQQAAHMQAAAAALGGHQSQFFFQRGPLQSSNQPSERGWPETVEADNQMSHHQGGLSPSVSAAIGFAAPGIGFSGFRLPARIQGDEEHNGGGGGNGDKPPPPSSVSSASHH</sequence>
<comment type="function">
    <text evidence="3">Transcription activator. Binds the promoter core sequence 5'-GGNCC-3'.</text>
</comment>
<comment type="subunit">
    <text evidence="4">Forms homodimers and heterodimers with PCF2.</text>
</comment>
<comment type="subcellular location">
    <subcellularLocation>
        <location evidence="4">Nucleus</location>
    </subcellularLocation>
</comment>
<comment type="sequence caution" evidence="4">
    <conflict type="erroneous gene model prediction">
        <sequence resource="EMBL-CDS" id="EAY73010"/>
    </conflict>
</comment>
<reference key="1">
    <citation type="journal article" date="2005" name="PLoS Biol.">
        <title>The genomes of Oryza sativa: a history of duplications.</title>
        <authorList>
            <person name="Yu J."/>
            <person name="Wang J."/>
            <person name="Lin W."/>
            <person name="Li S."/>
            <person name="Li H."/>
            <person name="Zhou J."/>
            <person name="Ni P."/>
            <person name="Dong W."/>
            <person name="Hu S."/>
            <person name="Zeng C."/>
            <person name="Zhang J."/>
            <person name="Zhang Y."/>
            <person name="Li R."/>
            <person name="Xu Z."/>
            <person name="Li S."/>
            <person name="Li X."/>
            <person name="Zheng H."/>
            <person name="Cong L."/>
            <person name="Lin L."/>
            <person name="Yin J."/>
            <person name="Geng J."/>
            <person name="Li G."/>
            <person name="Shi J."/>
            <person name="Liu J."/>
            <person name="Lv H."/>
            <person name="Li J."/>
            <person name="Wang J."/>
            <person name="Deng Y."/>
            <person name="Ran L."/>
            <person name="Shi X."/>
            <person name="Wang X."/>
            <person name="Wu Q."/>
            <person name="Li C."/>
            <person name="Ren X."/>
            <person name="Wang J."/>
            <person name="Wang X."/>
            <person name="Li D."/>
            <person name="Liu D."/>
            <person name="Zhang X."/>
            <person name="Ji Z."/>
            <person name="Zhao W."/>
            <person name="Sun Y."/>
            <person name="Zhang Z."/>
            <person name="Bao J."/>
            <person name="Han Y."/>
            <person name="Dong L."/>
            <person name="Ji J."/>
            <person name="Chen P."/>
            <person name="Wu S."/>
            <person name="Liu J."/>
            <person name="Xiao Y."/>
            <person name="Bu D."/>
            <person name="Tan J."/>
            <person name="Yang L."/>
            <person name="Ye C."/>
            <person name="Zhang J."/>
            <person name="Xu J."/>
            <person name="Zhou Y."/>
            <person name="Yu Y."/>
            <person name="Zhang B."/>
            <person name="Zhuang S."/>
            <person name="Wei H."/>
            <person name="Liu B."/>
            <person name="Lei M."/>
            <person name="Yu H."/>
            <person name="Li Y."/>
            <person name="Xu H."/>
            <person name="Wei S."/>
            <person name="He X."/>
            <person name="Fang L."/>
            <person name="Zhang Z."/>
            <person name="Zhang Y."/>
            <person name="Huang X."/>
            <person name="Su Z."/>
            <person name="Tong W."/>
            <person name="Li J."/>
            <person name="Tong Z."/>
            <person name="Li S."/>
            <person name="Ye J."/>
            <person name="Wang L."/>
            <person name="Fang L."/>
            <person name="Lei T."/>
            <person name="Chen C.-S."/>
            <person name="Chen H.-C."/>
            <person name="Xu Z."/>
            <person name="Li H."/>
            <person name="Huang H."/>
            <person name="Zhang F."/>
            <person name="Xu H."/>
            <person name="Li N."/>
            <person name="Zhao C."/>
            <person name="Li S."/>
            <person name="Dong L."/>
            <person name="Huang Y."/>
            <person name="Li L."/>
            <person name="Xi Y."/>
            <person name="Qi Q."/>
            <person name="Li W."/>
            <person name="Zhang B."/>
            <person name="Hu W."/>
            <person name="Zhang Y."/>
            <person name="Tian X."/>
            <person name="Jiao Y."/>
            <person name="Liang X."/>
            <person name="Jin J."/>
            <person name="Gao L."/>
            <person name="Zheng W."/>
            <person name="Hao B."/>
            <person name="Liu S.-M."/>
            <person name="Wang W."/>
            <person name="Yuan L."/>
            <person name="Cao M."/>
            <person name="McDermott J."/>
            <person name="Samudrala R."/>
            <person name="Wang J."/>
            <person name="Wong G.K.-S."/>
            <person name="Yang H."/>
        </authorList>
    </citation>
    <scope>NUCLEOTIDE SEQUENCE [LARGE SCALE GENOMIC DNA]</scope>
    <source>
        <strain>cv. 93-11</strain>
    </source>
</reference>
<reference key="2">
    <citation type="journal article" date="2002" name="Plant J.">
        <title>DNA binding and dimerization specificity and potential targets for the TCP protein family.</title>
        <authorList>
            <person name="Kosugi S."/>
            <person name="Ohashi Y."/>
        </authorList>
    </citation>
    <scope>FUNCTION</scope>
</reference>
<evidence type="ECO:0000255" key="1">
    <source>
        <dbReference type="PROSITE-ProRule" id="PRU00701"/>
    </source>
</evidence>
<evidence type="ECO:0000256" key="2">
    <source>
        <dbReference type="SAM" id="MobiDB-lite"/>
    </source>
</evidence>
<evidence type="ECO:0000269" key="3">
    <source>
    </source>
</evidence>
<evidence type="ECO:0000305" key="4"/>
<protein>
    <recommendedName>
        <fullName>Transcription factor PCF5</fullName>
    </recommendedName>
</protein>
<name>PCF5_ORYSI</name>
<dbReference type="EMBL" id="CM000126">
    <property type="protein sequence ID" value="EAY73010.1"/>
    <property type="status" value="ALT_SEQ"/>
    <property type="molecule type" value="Genomic_DNA"/>
</dbReference>
<dbReference type="SMR" id="A2WM14"/>
<dbReference type="STRING" id="39946.A2WM14"/>
<dbReference type="EnsemblPlants" id="BGIOSGA002128-TA">
    <property type="protein sequence ID" value="BGIOSGA002128-PA"/>
    <property type="gene ID" value="BGIOSGA002128"/>
</dbReference>
<dbReference type="Gramene" id="BGIOSGA002128-TA">
    <property type="protein sequence ID" value="BGIOSGA002128-PA"/>
    <property type="gene ID" value="BGIOSGA002128"/>
</dbReference>
<dbReference type="HOGENOM" id="CLU_033594_1_0_1"/>
<dbReference type="OMA" id="NQRMLPW"/>
<dbReference type="Proteomes" id="UP000007015">
    <property type="component" value="Chromosome 1"/>
</dbReference>
<dbReference type="GO" id="GO:0005634">
    <property type="term" value="C:nucleus"/>
    <property type="evidence" value="ECO:0007669"/>
    <property type="project" value="UniProtKB-SubCell"/>
</dbReference>
<dbReference type="GO" id="GO:0003700">
    <property type="term" value="F:DNA-binding transcription factor activity"/>
    <property type="evidence" value="ECO:0007669"/>
    <property type="project" value="InterPro"/>
</dbReference>
<dbReference type="GO" id="GO:0043565">
    <property type="term" value="F:sequence-specific DNA binding"/>
    <property type="evidence" value="ECO:0007669"/>
    <property type="project" value="TreeGrafter"/>
</dbReference>
<dbReference type="InterPro" id="IPR017887">
    <property type="entry name" value="TF_TCP_subgr"/>
</dbReference>
<dbReference type="InterPro" id="IPR005333">
    <property type="entry name" value="Transcription_factor_TCP"/>
</dbReference>
<dbReference type="PANTHER" id="PTHR31072:SF273">
    <property type="entry name" value="TRANSCRIPTION FACTOR TCP4"/>
    <property type="match status" value="1"/>
</dbReference>
<dbReference type="PANTHER" id="PTHR31072">
    <property type="entry name" value="TRANSCRIPTION FACTOR TCP4-RELATED"/>
    <property type="match status" value="1"/>
</dbReference>
<dbReference type="Pfam" id="PF03634">
    <property type="entry name" value="TCP"/>
    <property type="match status" value="1"/>
</dbReference>
<dbReference type="PROSITE" id="PS51369">
    <property type="entry name" value="TCP"/>
    <property type="match status" value="1"/>
</dbReference>
<accession>A2WM14</accession>
<organism>
    <name type="scientific">Oryza sativa subsp. indica</name>
    <name type="common">Rice</name>
    <dbReference type="NCBI Taxonomy" id="39946"/>
    <lineage>
        <taxon>Eukaryota</taxon>
        <taxon>Viridiplantae</taxon>
        <taxon>Streptophyta</taxon>
        <taxon>Embryophyta</taxon>
        <taxon>Tracheophyta</taxon>
        <taxon>Spermatophyta</taxon>
        <taxon>Magnoliopsida</taxon>
        <taxon>Liliopsida</taxon>
        <taxon>Poales</taxon>
        <taxon>Poaceae</taxon>
        <taxon>BOP clade</taxon>
        <taxon>Oryzoideae</taxon>
        <taxon>Oryzeae</taxon>
        <taxon>Oryzinae</taxon>
        <taxon>Oryza</taxon>
        <taxon>Oryza sativa</taxon>
    </lineage>
</organism>
<proteinExistence type="predicted"/>